<keyword id="KW-0903">Direct protein sequencing</keyword>
<keyword id="KW-0274">FAD</keyword>
<keyword id="KW-0285">Flavoprotein</keyword>
<keyword id="KW-0479">Metal-binding</keyword>
<keyword id="KW-0533">Nickel</keyword>
<keyword id="KW-0560">Oxidoreductase</keyword>
<keyword id="KW-1185">Reference proteome</keyword>
<comment type="function">
    <text>Reduces the physiological low-potential two-electron acceptor coenzyme F420, and the artificial one-electron acceptor methylviologen.</text>
</comment>
<comment type="catalytic activity">
    <reaction>
        <text>oxidized coenzyme F420-(gamma-L-Glu)(n) + H2 + H(+) = reduced coenzyme F420-(gamma-L-Glu)(n)</text>
        <dbReference type="Rhea" id="RHEA:23760"/>
        <dbReference type="Rhea" id="RHEA-COMP:12939"/>
        <dbReference type="Rhea" id="RHEA-COMP:14378"/>
        <dbReference type="ChEBI" id="CHEBI:15378"/>
        <dbReference type="ChEBI" id="CHEBI:18276"/>
        <dbReference type="ChEBI" id="CHEBI:133980"/>
        <dbReference type="ChEBI" id="CHEBI:139511"/>
        <dbReference type="EC" id="1.12.98.1"/>
    </reaction>
</comment>
<comment type="cofactor">
    <cofactor>
        <name>Ni(2+)</name>
        <dbReference type="ChEBI" id="CHEBI:49786"/>
    </cofactor>
</comment>
<comment type="cofactor">
    <cofactor>
        <name>iron-sulfur cluster</name>
        <dbReference type="ChEBI" id="CHEBI:30408"/>
    </cofactor>
    <text>There are 12-13 Fe atoms/(alpha(1)beta(1)gamma(1)) unit of the FRH.</text>
</comment>
<comment type="cofactor">
    <cofactor>
        <name>FAD</name>
        <dbReference type="ChEBI" id="CHEBI:57692"/>
    </cofactor>
</comment>
<comment type="subunit">
    <text>Heterocomplex of the form (alpha(1)beta(1)gamma(1))(8).</text>
</comment>
<comment type="similarity">
    <text evidence="3">Belongs to the [NiFe]/[NiFeSe] hydrogenase large subunit family.</text>
</comment>
<comment type="sequence caution" evidence="3">
    <conflict type="erroneous initiation">
        <sequence resource="EMBL-CDS" id="AAB85780"/>
    </conflict>
</comment>
<reference key="1">
    <citation type="journal article" date="1990" name="Biochemistry">
        <title>Cloning, sequence determination, and expression of the genes encoding the subunits of the nickel-containing 8-hydroxy-5-deazaflavin reducing hydrogenase from Methanobacterium thermoautotrophicum delta H.</title>
        <authorList>
            <person name="Alex L.A."/>
            <person name="Reeve J.N."/>
            <person name="Orme-Johnson W.H."/>
            <person name="Walsh C.T."/>
        </authorList>
    </citation>
    <scope>NUCLEOTIDE SEQUENCE [GENOMIC DNA]</scope>
    <scope>PARTIAL PROTEIN SEQUENCE</scope>
    <source>
        <strain>ATCC 29096 / DSM 1053 / JCM 10044 / NBRC 100330 / Delta H</strain>
    </source>
</reference>
<reference key="2">
    <citation type="journal article" date="1997" name="J. Bacteriol.">
        <title>Complete genome sequence of Methanobacterium thermoautotrophicum deltaH: functional analysis and comparative genomics.</title>
        <authorList>
            <person name="Smith D.R."/>
            <person name="Doucette-Stamm L.A."/>
            <person name="Deloughery C."/>
            <person name="Lee H.-M."/>
            <person name="Dubois J."/>
            <person name="Aldredge T."/>
            <person name="Bashirzadeh R."/>
            <person name="Blakely D."/>
            <person name="Cook R."/>
            <person name="Gilbert K."/>
            <person name="Harrison D."/>
            <person name="Hoang L."/>
            <person name="Keagle P."/>
            <person name="Lumm W."/>
            <person name="Pothier B."/>
            <person name="Qiu D."/>
            <person name="Spadafora R."/>
            <person name="Vicare R."/>
            <person name="Wang Y."/>
            <person name="Wierzbowski J."/>
            <person name="Gibson R."/>
            <person name="Jiwani N."/>
            <person name="Caruso A."/>
            <person name="Bush D."/>
            <person name="Safer H."/>
            <person name="Patwell D."/>
            <person name="Prabhakar S."/>
            <person name="McDougall S."/>
            <person name="Shimer G."/>
            <person name="Goyal A."/>
            <person name="Pietrovski S."/>
            <person name="Church G.M."/>
            <person name="Daniels C.J."/>
            <person name="Mao J.-I."/>
            <person name="Rice P."/>
            <person name="Noelling J."/>
            <person name="Reeve J.N."/>
        </authorList>
    </citation>
    <scope>NUCLEOTIDE SEQUENCE [LARGE SCALE GENOMIC DNA]</scope>
    <source>
        <strain>ATCC 29096 / DSM 1053 / JCM 10044 / NBRC 100330 / Delta H</strain>
    </source>
</reference>
<reference key="3">
    <citation type="journal article" date="1987" name="Biochemistry">
        <title>8-hydroxy-5-deazaflavin-reducing hydrogenase from Methanobacterium thermoautotrophicum: 1. Purification and characterization.</title>
        <authorList>
            <person name="Fox J.A."/>
            <person name="Livingston D.J."/>
            <person name="Orme-Johnson W.H."/>
            <person name="Walsh C.T."/>
        </authorList>
    </citation>
    <scope>PROTEIN SEQUENCE OF 2-31</scope>
    <source>
        <strain>ATCC 29096 / DSM 1053 / JCM 10044 / NBRC 100330 / Delta H</strain>
    </source>
</reference>
<feature type="initiator methionine" description="Removed" evidence="2">
    <location>
        <position position="1"/>
    </location>
</feature>
<feature type="chain" id="PRO_0000199723" description="Coenzyme F420 hydrogenase subunit alpha">
    <location>
        <begin position="2"/>
        <end position="405"/>
    </location>
</feature>
<feature type="binding site" evidence="1">
    <location>
        <position position="63"/>
    </location>
    <ligand>
        <name>Ni(2+)</name>
        <dbReference type="ChEBI" id="CHEBI:49786"/>
    </ligand>
</feature>
<feature type="binding site" evidence="1">
    <location>
        <position position="66"/>
    </location>
    <ligand>
        <name>Ni(2+)</name>
        <dbReference type="ChEBI" id="CHEBI:49786"/>
    </ligand>
</feature>
<feature type="binding site" evidence="1">
    <location>
        <position position="380"/>
    </location>
    <ligand>
        <name>Ni(2+)</name>
        <dbReference type="ChEBI" id="CHEBI:49786"/>
    </ligand>
</feature>
<feature type="binding site" evidence="1">
    <location>
        <position position="383"/>
    </location>
    <ligand>
        <name>Ni(2+)</name>
        <dbReference type="ChEBI" id="CHEBI:49786"/>
    </ligand>
</feature>
<evidence type="ECO:0000255" key="1"/>
<evidence type="ECO:0000269" key="2">
    <source>
    </source>
</evidence>
<evidence type="ECO:0000305" key="3"/>
<dbReference type="EC" id="1.12.98.1"/>
<dbReference type="EMBL" id="J02914">
    <property type="protein sequence ID" value="AAA72187.1"/>
    <property type="molecule type" value="Genomic_DNA"/>
</dbReference>
<dbReference type="EMBL" id="AE000666">
    <property type="protein sequence ID" value="AAB85780.1"/>
    <property type="status" value="ALT_INIT"/>
    <property type="molecule type" value="Genomic_DNA"/>
</dbReference>
<dbReference type="PIR" id="A35620">
    <property type="entry name" value="A35620"/>
</dbReference>
<dbReference type="RefSeq" id="WP_048061018.1">
    <property type="nucleotide sequence ID" value="NC_000916.1"/>
</dbReference>
<dbReference type="SMR" id="P19496"/>
<dbReference type="FunCoup" id="P19496">
    <property type="interactions" value="3"/>
</dbReference>
<dbReference type="IntAct" id="P19496">
    <property type="interactions" value="2"/>
</dbReference>
<dbReference type="STRING" id="187420.MTH_1300"/>
<dbReference type="PaxDb" id="187420-MTH_1300"/>
<dbReference type="EnsemblBacteria" id="AAB85780">
    <property type="protein sequence ID" value="AAB85780"/>
    <property type="gene ID" value="MTH_1300"/>
</dbReference>
<dbReference type="GeneID" id="82297738"/>
<dbReference type="KEGG" id="mth:MTH_1300"/>
<dbReference type="PATRIC" id="fig|187420.15.peg.1271"/>
<dbReference type="HOGENOM" id="CLU_044556_1_0_2"/>
<dbReference type="InParanoid" id="P19496"/>
<dbReference type="BRENDA" id="1.12.98.1">
    <property type="organism ID" value="3256"/>
</dbReference>
<dbReference type="Proteomes" id="UP000005223">
    <property type="component" value="Chromosome"/>
</dbReference>
<dbReference type="GO" id="GO:0050454">
    <property type="term" value="F:coenzyme F420 hydrogenase activity"/>
    <property type="evidence" value="ECO:0007669"/>
    <property type="project" value="UniProtKB-EC"/>
</dbReference>
<dbReference type="GO" id="GO:0008901">
    <property type="term" value="F:ferredoxin hydrogenase activity"/>
    <property type="evidence" value="ECO:0007669"/>
    <property type="project" value="InterPro"/>
</dbReference>
<dbReference type="GO" id="GO:0050660">
    <property type="term" value="F:flavin adenine dinucleotide binding"/>
    <property type="evidence" value="ECO:0007669"/>
    <property type="project" value="InterPro"/>
</dbReference>
<dbReference type="GO" id="GO:0051536">
    <property type="term" value="F:iron-sulfur cluster binding"/>
    <property type="evidence" value="ECO:0007669"/>
    <property type="project" value="InterPro"/>
</dbReference>
<dbReference type="GO" id="GO:0016151">
    <property type="term" value="F:nickel cation binding"/>
    <property type="evidence" value="ECO:0007669"/>
    <property type="project" value="InterPro"/>
</dbReference>
<dbReference type="Gene3D" id="1.10.645.10">
    <property type="entry name" value="Cytochrome-c3 Hydrogenase, chain B"/>
    <property type="match status" value="1"/>
</dbReference>
<dbReference type="InterPro" id="IPR017682">
    <property type="entry name" value="Coenz_F420_hydrogenase_asu"/>
</dbReference>
<dbReference type="InterPro" id="IPR001501">
    <property type="entry name" value="Ni-dep_hyd_lsu"/>
</dbReference>
<dbReference type="InterPro" id="IPR018194">
    <property type="entry name" value="Ni-dep_hyd_lsu_Ni_BS"/>
</dbReference>
<dbReference type="InterPro" id="IPR029014">
    <property type="entry name" value="NiFe-Hase_large"/>
</dbReference>
<dbReference type="NCBIfam" id="TIGR03295">
    <property type="entry name" value="frhA"/>
    <property type="match status" value="1"/>
</dbReference>
<dbReference type="PANTHER" id="PTHR43600:SF1">
    <property type="entry name" value="COENZYME F420 HYDROGENASE SUBUNIT ALPHA"/>
    <property type="match status" value="1"/>
</dbReference>
<dbReference type="PANTHER" id="PTHR43600">
    <property type="entry name" value="COENZYME F420 HYDROGENASE, SUBUNIT ALPHA"/>
    <property type="match status" value="1"/>
</dbReference>
<dbReference type="Pfam" id="PF00374">
    <property type="entry name" value="NiFeSe_Hases"/>
    <property type="match status" value="2"/>
</dbReference>
<dbReference type="SUPFAM" id="SSF56762">
    <property type="entry name" value="HydB/Nqo4-like"/>
    <property type="match status" value="1"/>
</dbReference>
<dbReference type="PROSITE" id="PS00507">
    <property type="entry name" value="NI_HGENASE_L_1"/>
    <property type="match status" value="1"/>
</dbReference>
<dbReference type="PROSITE" id="PS00508">
    <property type="entry name" value="NI_HGENASE_L_2"/>
    <property type="match status" value="1"/>
</dbReference>
<sequence length="405" mass="44802">MSERIVISPTSRQEGHAELVMEVDDEGIVTKGRYFSITPVRGLEKIVTGKAPETAPVIVQRICGVCPIPHTLASVEAIDDSLDIEVPKAGRLLRELTLAAHHVNSHAIHHFLIAPDFVPENLMADAINSVSEIRKNAQYVVDMVAGEGIHPSDVRIGGMADNITELARKRLYARLKQLKPKVDEHVELMIGLIEDKGLPKGLGVHNQPTLASHQIYGDRTKFDLDRFTEVMPESWYDDPEIAKRACSTIPLYDGRNVEVGPRARMVEFQGFKERGVVAQHVARALEMKTALARAIEILDELDTSAPVRADFDERGTGKLGVGAIEGPRGLDVHMAQVENGKIQFYSALVPTTWNIPTMGPATEGFHHEYGPHVIRAYDPCLSCATHVMVVDDEDRSVIRDEMVRL</sequence>
<gene>
    <name type="primary">frhA</name>
    <name type="ordered locus">MTH_1300</name>
</gene>
<proteinExistence type="evidence at protein level"/>
<accession>P19496</accession>
<protein>
    <recommendedName>
        <fullName>Coenzyme F420 hydrogenase subunit alpha</fullName>
        <ecNumber>1.12.98.1</ecNumber>
    </recommendedName>
    <alternativeName>
        <fullName>8-hydroxy-5-deazaflavin-reducing hydrogenase subunit alpha</fullName>
        <shortName>FRH</shortName>
    </alternativeName>
</protein>
<organism>
    <name type="scientific">Methanothermobacter thermautotrophicus (strain ATCC 29096 / DSM 1053 / JCM 10044 / NBRC 100330 / Delta H)</name>
    <name type="common">Methanobacterium thermoautotrophicum</name>
    <dbReference type="NCBI Taxonomy" id="187420"/>
    <lineage>
        <taxon>Archaea</taxon>
        <taxon>Methanobacteriati</taxon>
        <taxon>Methanobacteriota</taxon>
        <taxon>Methanomada group</taxon>
        <taxon>Methanobacteria</taxon>
        <taxon>Methanobacteriales</taxon>
        <taxon>Methanobacteriaceae</taxon>
        <taxon>Methanothermobacter</taxon>
    </lineage>
</organism>
<name>FRHA_METTH</name>